<organism>
    <name type="scientific">Eclipta prostrata</name>
    <name type="common">False daisy</name>
    <name type="synonym">Eclipta alba</name>
    <dbReference type="NCBI Taxonomy" id="53719"/>
    <lineage>
        <taxon>Eukaryota</taxon>
        <taxon>Viridiplantae</taxon>
        <taxon>Streptophyta</taxon>
        <taxon>Embryophyta</taxon>
        <taxon>Tracheophyta</taxon>
        <taxon>Spermatophyta</taxon>
        <taxon>Magnoliopsida</taxon>
        <taxon>eudicotyledons</taxon>
        <taxon>Gunneridae</taxon>
        <taxon>Pentapetalae</taxon>
        <taxon>asterids</taxon>
        <taxon>campanulids</taxon>
        <taxon>Asterales</taxon>
        <taxon>Asteraceae</taxon>
        <taxon>Asteroideae</taxon>
        <taxon>Heliantheae alliance</taxon>
        <taxon>Heliantheae</taxon>
        <taxon>Eclipta</taxon>
    </lineage>
</organism>
<accession>Q8HVQ1</accession>
<comment type="function">
    <text evidence="1">NDH shuttles electrons from NAD(P)H:plastoquinone, via FMN and iron-sulfur (Fe-S) centers, to quinones in the photosynthetic chain and possibly in a chloroplast respiratory chain. The immediate electron acceptor for the enzyme in this species is believed to be plastoquinone. Couples the redox reaction to proton translocation, and thus conserves the redox energy in a proton gradient.</text>
</comment>
<comment type="catalytic activity">
    <reaction evidence="1">
        <text>a plastoquinone + NADH + (n+1) H(+)(in) = a plastoquinol + NAD(+) + n H(+)(out)</text>
        <dbReference type="Rhea" id="RHEA:42608"/>
        <dbReference type="Rhea" id="RHEA-COMP:9561"/>
        <dbReference type="Rhea" id="RHEA-COMP:9562"/>
        <dbReference type="ChEBI" id="CHEBI:15378"/>
        <dbReference type="ChEBI" id="CHEBI:17757"/>
        <dbReference type="ChEBI" id="CHEBI:57540"/>
        <dbReference type="ChEBI" id="CHEBI:57945"/>
        <dbReference type="ChEBI" id="CHEBI:62192"/>
    </reaction>
</comment>
<comment type="catalytic activity">
    <reaction evidence="1">
        <text>a plastoquinone + NADPH + (n+1) H(+)(in) = a plastoquinol + NADP(+) + n H(+)(out)</text>
        <dbReference type="Rhea" id="RHEA:42612"/>
        <dbReference type="Rhea" id="RHEA-COMP:9561"/>
        <dbReference type="Rhea" id="RHEA-COMP:9562"/>
        <dbReference type="ChEBI" id="CHEBI:15378"/>
        <dbReference type="ChEBI" id="CHEBI:17757"/>
        <dbReference type="ChEBI" id="CHEBI:57783"/>
        <dbReference type="ChEBI" id="CHEBI:58349"/>
        <dbReference type="ChEBI" id="CHEBI:62192"/>
    </reaction>
</comment>
<comment type="cofactor">
    <cofactor evidence="1">
        <name>[4Fe-4S] cluster</name>
        <dbReference type="ChEBI" id="CHEBI:49883"/>
    </cofactor>
    <text evidence="1">Binds 2 [4Fe-4S] clusters per subunit.</text>
</comment>
<comment type="subunit">
    <text evidence="1">NDH is composed of at least 16 different subunits, 5 of which are encoded in the nucleus.</text>
</comment>
<comment type="subcellular location">
    <subcellularLocation>
        <location evidence="1">Plastid</location>
        <location evidence="1">Chloroplast thylakoid membrane</location>
        <topology evidence="1">Peripheral membrane protein</topology>
    </subcellularLocation>
</comment>
<comment type="similarity">
    <text evidence="1">Belongs to the complex I 23 kDa subunit family.</text>
</comment>
<feature type="chain" id="PRO_0000250783" description="NAD(P)H-quinone oxidoreductase subunit I, chloroplastic">
    <location>
        <begin position="1"/>
        <end position="166"/>
    </location>
</feature>
<feature type="domain" description="4Fe-4S ferredoxin-type 1" evidence="1">
    <location>
        <begin position="55"/>
        <end position="84"/>
    </location>
</feature>
<feature type="domain" description="4Fe-4S ferredoxin-type 2" evidence="1">
    <location>
        <begin position="95"/>
        <end position="124"/>
    </location>
</feature>
<feature type="binding site" evidence="1">
    <location>
        <position position="64"/>
    </location>
    <ligand>
        <name>[4Fe-4S] cluster</name>
        <dbReference type="ChEBI" id="CHEBI:49883"/>
        <label>1</label>
    </ligand>
</feature>
<feature type="binding site" evidence="1">
    <location>
        <position position="67"/>
    </location>
    <ligand>
        <name>[4Fe-4S] cluster</name>
        <dbReference type="ChEBI" id="CHEBI:49883"/>
        <label>1</label>
    </ligand>
</feature>
<feature type="binding site" evidence="1">
    <location>
        <position position="70"/>
    </location>
    <ligand>
        <name>[4Fe-4S] cluster</name>
        <dbReference type="ChEBI" id="CHEBI:49883"/>
        <label>1</label>
    </ligand>
</feature>
<feature type="binding site" evidence="1">
    <location>
        <position position="74"/>
    </location>
    <ligand>
        <name>[4Fe-4S] cluster</name>
        <dbReference type="ChEBI" id="CHEBI:49883"/>
        <label>2</label>
    </ligand>
</feature>
<feature type="binding site" evidence="1">
    <location>
        <position position="104"/>
    </location>
    <ligand>
        <name>[4Fe-4S] cluster</name>
        <dbReference type="ChEBI" id="CHEBI:49883"/>
        <label>2</label>
    </ligand>
</feature>
<feature type="binding site" evidence="1">
    <location>
        <position position="107"/>
    </location>
    <ligand>
        <name>[4Fe-4S] cluster</name>
        <dbReference type="ChEBI" id="CHEBI:49883"/>
        <label>2</label>
    </ligand>
</feature>
<feature type="binding site" evidence="1">
    <location>
        <position position="110"/>
    </location>
    <ligand>
        <name>[4Fe-4S] cluster</name>
        <dbReference type="ChEBI" id="CHEBI:49883"/>
        <label>2</label>
    </ligand>
</feature>
<feature type="binding site" evidence="1">
    <location>
        <position position="114"/>
    </location>
    <ligand>
        <name>[4Fe-4S] cluster</name>
        <dbReference type="ChEBI" id="CHEBI:49883"/>
        <label>1</label>
    </ligand>
</feature>
<sequence>MFPMVTEFMNYGQQTIRAARYIGQGFMITLSHANRLPVTIQYPYEKLITSERFRGRIHFEFDKCIACEVCVRVCPIDLPVVDWKLETDIRKKRLLNYSIDFGICIFCGNCVEYCPTNCLSMTEEYELSTYDRHELNYNQIALGRLPMSIIDDYTIRTILNLPEIKT</sequence>
<gene>
    <name evidence="1" type="primary">ndhI</name>
</gene>
<geneLocation type="chloroplast"/>
<reference key="1">
    <citation type="submission" date="2003-01" db="EMBL/GenBank/DDBJ databases">
        <title>Chloroplast DNA phylogeny of tribe Heliantheae (Asteraceae).</title>
        <authorList>
            <person name="Panero J.L."/>
            <person name="Baldwin B.G."/>
            <person name="Schilling E.E."/>
            <person name="Clevinger J.A."/>
        </authorList>
    </citation>
    <scope>NUCLEOTIDE SEQUENCE [GENOMIC DNA]</scope>
</reference>
<protein>
    <recommendedName>
        <fullName evidence="1">NAD(P)H-quinone oxidoreductase subunit I, chloroplastic</fullName>
        <ecNumber evidence="1">7.1.1.-</ecNumber>
    </recommendedName>
    <alternativeName>
        <fullName evidence="1">NAD(P)H dehydrogenase subunit I</fullName>
        <shortName evidence="1">NDH subunit I</shortName>
    </alternativeName>
    <alternativeName>
        <fullName evidence="1">NADH-plastoquinone oxidoreductase subunit I</fullName>
    </alternativeName>
</protein>
<evidence type="ECO:0000255" key="1">
    <source>
        <dbReference type="HAMAP-Rule" id="MF_01351"/>
    </source>
</evidence>
<proteinExistence type="inferred from homology"/>
<keyword id="KW-0004">4Fe-4S</keyword>
<keyword id="KW-0150">Chloroplast</keyword>
<keyword id="KW-0408">Iron</keyword>
<keyword id="KW-0411">Iron-sulfur</keyword>
<keyword id="KW-0472">Membrane</keyword>
<keyword id="KW-0479">Metal-binding</keyword>
<keyword id="KW-0520">NAD</keyword>
<keyword id="KW-0521">NADP</keyword>
<keyword id="KW-0934">Plastid</keyword>
<keyword id="KW-0618">Plastoquinone</keyword>
<keyword id="KW-0874">Quinone</keyword>
<keyword id="KW-0677">Repeat</keyword>
<keyword id="KW-0793">Thylakoid</keyword>
<keyword id="KW-1278">Translocase</keyword>
<name>NDHI_ECLPR</name>
<dbReference type="EC" id="7.1.1.-" evidence="1"/>
<dbReference type="EMBL" id="AF383780">
    <property type="protein sequence ID" value="AAN61753.1"/>
    <property type="molecule type" value="Genomic_DNA"/>
</dbReference>
<dbReference type="RefSeq" id="YP_009271524.1">
    <property type="nucleotide sequence ID" value="NC_030773.1"/>
</dbReference>
<dbReference type="SMR" id="Q8HVQ1"/>
<dbReference type="GeneID" id="28481782"/>
<dbReference type="GO" id="GO:0009535">
    <property type="term" value="C:chloroplast thylakoid membrane"/>
    <property type="evidence" value="ECO:0007669"/>
    <property type="project" value="UniProtKB-SubCell"/>
</dbReference>
<dbReference type="GO" id="GO:0051539">
    <property type="term" value="F:4 iron, 4 sulfur cluster binding"/>
    <property type="evidence" value="ECO:0007669"/>
    <property type="project" value="UniProtKB-KW"/>
</dbReference>
<dbReference type="GO" id="GO:0005506">
    <property type="term" value="F:iron ion binding"/>
    <property type="evidence" value="ECO:0007669"/>
    <property type="project" value="UniProtKB-UniRule"/>
</dbReference>
<dbReference type="GO" id="GO:0008137">
    <property type="term" value="F:NADH dehydrogenase (ubiquinone) activity"/>
    <property type="evidence" value="ECO:0007669"/>
    <property type="project" value="InterPro"/>
</dbReference>
<dbReference type="GO" id="GO:0048038">
    <property type="term" value="F:quinone binding"/>
    <property type="evidence" value="ECO:0007669"/>
    <property type="project" value="UniProtKB-KW"/>
</dbReference>
<dbReference type="GO" id="GO:0019684">
    <property type="term" value="P:photosynthesis, light reaction"/>
    <property type="evidence" value="ECO:0007669"/>
    <property type="project" value="UniProtKB-UniRule"/>
</dbReference>
<dbReference type="FunFam" id="3.30.70.3270:FF:000006">
    <property type="entry name" value="NAD(P)H-quinone oxidoreductase subunit I, chloroplastic"/>
    <property type="match status" value="1"/>
</dbReference>
<dbReference type="Gene3D" id="3.30.70.3270">
    <property type="match status" value="1"/>
</dbReference>
<dbReference type="HAMAP" id="MF_01351">
    <property type="entry name" value="NDH1_NuoI"/>
    <property type="match status" value="1"/>
</dbReference>
<dbReference type="InterPro" id="IPR017896">
    <property type="entry name" value="4Fe4S_Fe-S-bd"/>
</dbReference>
<dbReference type="InterPro" id="IPR017900">
    <property type="entry name" value="4Fe4S_Fe_S_CS"/>
</dbReference>
<dbReference type="InterPro" id="IPR010226">
    <property type="entry name" value="NADH_quinone_OxRdtase_chainI"/>
</dbReference>
<dbReference type="InterPro" id="IPR004497">
    <property type="entry name" value="NDHI"/>
</dbReference>
<dbReference type="NCBIfam" id="TIGR00403">
    <property type="entry name" value="ndhI"/>
    <property type="match status" value="1"/>
</dbReference>
<dbReference type="NCBIfam" id="TIGR01971">
    <property type="entry name" value="NuoI"/>
    <property type="match status" value="1"/>
</dbReference>
<dbReference type="NCBIfam" id="NF004537">
    <property type="entry name" value="PRK05888.1-3"/>
    <property type="match status" value="1"/>
</dbReference>
<dbReference type="PANTHER" id="PTHR47275">
    <property type="entry name" value="NAD(P)H-QUINONE OXIDOREDUCTASE SUBUNIT I, CHLOROPLASTIC"/>
    <property type="match status" value="1"/>
</dbReference>
<dbReference type="PANTHER" id="PTHR47275:SF1">
    <property type="entry name" value="NAD(P)H-QUINONE OXIDOREDUCTASE SUBUNIT I, CHLOROPLASTIC"/>
    <property type="match status" value="1"/>
</dbReference>
<dbReference type="Pfam" id="PF00037">
    <property type="entry name" value="Fer4"/>
    <property type="match status" value="2"/>
</dbReference>
<dbReference type="SUPFAM" id="SSF54862">
    <property type="entry name" value="4Fe-4S ferredoxins"/>
    <property type="match status" value="1"/>
</dbReference>
<dbReference type="PROSITE" id="PS00198">
    <property type="entry name" value="4FE4S_FER_1"/>
    <property type="match status" value="2"/>
</dbReference>
<dbReference type="PROSITE" id="PS51379">
    <property type="entry name" value="4FE4S_FER_2"/>
    <property type="match status" value="2"/>
</dbReference>